<proteinExistence type="inferred from homology"/>
<accession>A9BHH8</accession>
<organism>
    <name type="scientific">Petrotoga mobilis (strain DSM 10674 / SJ95)</name>
    <dbReference type="NCBI Taxonomy" id="403833"/>
    <lineage>
        <taxon>Bacteria</taxon>
        <taxon>Thermotogati</taxon>
        <taxon>Thermotogota</taxon>
        <taxon>Thermotogae</taxon>
        <taxon>Petrotogales</taxon>
        <taxon>Petrotogaceae</taxon>
        <taxon>Petrotoga</taxon>
    </lineage>
</organism>
<sequence>MIEYETKVKIDELKENFEDLKDVFNIDKVEEEVKKLDKEMMEPNFWNDQNRAKKISKMAQNLKDEIDEFKKLENDFEELEIAVELSEDDPSMTAQVEAILKVIEKKIGSFRLRMLLSEEYDDANAFLSLHPGAGGTESQDWASMLLRMYTRWADKNNYDIETIDFQEGDEAGIKSATIKISGPYAYGKLKYESGVHRLVRISPFDANGRRHTSFASISVMPEFDENVEIEINPDDLKIDTYRSGGAGGQHVNKTDSAVRITHLPTGIVVAVQNERSQHQNKATALKILKAKLYELEHQKKLEEKLRLRGEVKDISWGNQIRSYVLYPYTLVKDLRTEYETSNAQAVLDGEIDEFIEEELLFFAKYK</sequence>
<dbReference type="EMBL" id="CP000879">
    <property type="protein sequence ID" value="ABX31587.1"/>
    <property type="molecule type" value="Genomic_DNA"/>
</dbReference>
<dbReference type="RefSeq" id="WP_012208690.1">
    <property type="nucleotide sequence ID" value="NC_010003.1"/>
</dbReference>
<dbReference type="SMR" id="A9BHH8"/>
<dbReference type="STRING" id="403833.Pmob_0864"/>
<dbReference type="KEGG" id="pmo:Pmob_0864"/>
<dbReference type="eggNOG" id="COG1186">
    <property type="taxonomic scope" value="Bacteria"/>
</dbReference>
<dbReference type="HOGENOM" id="CLU_036856_6_0_0"/>
<dbReference type="OrthoDB" id="9806673at2"/>
<dbReference type="Proteomes" id="UP000000789">
    <property type="component" value="Chromosome"/>
</dbReference>
<dbReference type="GO" id="GO:0005737">
    <property type="term" value="C:cytoplasm"/>
    <property type="evidence" value="ECO:0007669"/>
    <property type="project" value="UniProtKB-SubCell"/>
</dbReference>
<dbReference type="GO" id="GO:0016149">
    <property type="term" value="F:translation release factor activity, codon specific"/>
    <property type="evidence" value="ECO:0007669"/>
    <property type="project" value="UniProtKB-UniRule"/>
</dbReference>
<dbReference type="FunFam" id="3.30.160.20:FF:000010">
    <property type="entry name" value="Peptide chain release factor 2"/>
    <property type="match status" value="1"/>
</dbReference>
<dbReference type="Gene3D" id="3.30.160.20">
    <property type="match status" value="1"/>
</dbReference>
<dbReference type="Gene3D" id="3.30.70.1660">
    <property type="match status" value="1"/>
</dbReference>
<dbReference type="Gene3D" id="1.20.58.410">
    <property type="entry name" value="Release factor"/>
    <property type="match status" value="1"/>
</dbReference>
<dbReference type="HAMAP" id="MF_00094">
    <property type="entry name" value="Rel_fac_2"/>
    <property type="match status" value="1"/>
</dbReference>
<dbReference type="InterPro" id="IPR005139">
    <property type="entry name" value="PCRF"/>
</dbReference>
<dbReference type="InterPro" id="IPR000352">
    <property type="entry name" value="Pep_chain_release_fac_I"/>
</dbReference>
<dbReference type="InterPro" id="IPR045853">
    <property type="entry name" value="Pep_chain_release_fac_I_sf"/>
</dbReference>
<dbReference type="InterPro" id="IPR004374">
    <property type="entry name" value="PrfB"/>
</dbReference>
<dbReference type="NCBIfam" id="TIGR00020">
    <property type="entry name" value="prfB"/>
    <property type="match status" value="1"/>
</dbReference>
<dbReference type="PANTHER" id="PTHR43116:SF3">
    <property type="entry name" value="CLASS I PEPTIDE CHAIN RELEASE FACTOR"/>
    <property type="match status" value="1"/>
</dbReference>
<dbReference type="PANTHER" id="PTHR43116">
    <property type="entry name" value="PEPTIDE CHAIN RELEASE FACTOR 2"/>
    <property type="match status" value="1"/>
</dbReference>
<dbReference type="Pfam" id="PF03462">
    <property type="entry name" value="PCRF"/>
    <property type="match status" value="1"/>
</dbReference>
<dbReference type="Pfam" id="PF00472">
    <property type="entry name" value="RF-1"/>
    <property type="match status" value="1"/>
</dbReference>
<dbReference type="SMART" id="SM00937">
    <property type="entry name" value="PCRF"/>
    <property type="match status" value="1"/>
</dbReference>
<dbReference type="SUPFAM" id="SSF75620">
    <property type="entry name" value="Release factor"/>
    <property type="match status" value="1"/>
</dbReference>
<dbReference type="PROSITE" id="PS00745">
    <property type="entry name" value="RF_PROK_I"/>
    <property type="match status" value="1"/>
</dbReference>
<gene>
    <name evidence="1" type="primary">prfB</name>
    <name type="ordered locus">Pmob_0864</name>
</gene>
<feature type="chain" id="PRO_1000075527" description="Peptide chain release factor 2">
    <location>
        <begin position="1"/>
        <end position="366"/>
    </location>
</feature>
<feature type="modified residue" description="N5-methylglutamine" evidence="1">
    <location>
        <position position="249"/>
    </location>
</feature>
<protein>
    <recommendedName>
        <fullName evidence="1">Peptide chain release factor 2</fullName>
        <shortName evidence="1">RF-2</shortName>
    </recommendedName>
</protein>
<keyword id="KW-0963">Cytoplasm</keyword>
<keyword id="KW-0488">Methylation</keyword>
<keyword id="KW-0648">Protein biosynthesis</keyword>
<name>RF2_PETMO</name>
<comment type="function">
    <text evidence="1">Peptide chain release factor 2 directs the termination of translation in response to the peptide chain termination codons UGA and UAA.</text>
</comment>
<comment type="subcellular location">
    <subcellularLocation>
        <location evidence="1">Cytoplasm</location>
    </subcellularLocation>
</comment>
<comment type="PTM">
    <text evidence="1">Methylated by PrmC. Methylation increases the termination efficiency of RF2.</text>
</comment>
<comment type="similarity">
    <text evidence="1">Belongs to the prokaryotic/mitochondrial release factor family.</text>
</comment>
<evidence type="ECO:0000255" key="1">
    <source>
        <dbReference type="HAMAP-Rule" id="MF_00094"/>
    </source>
</evidence>
<reference key="1">
    <citation type="submission" date="2007-11" db="EMBL/GenBank/DDBJ databases">
        <title>Complete sequence of Petroga mobilis SJ95.</title>
        <authorList>
            <consortium name="US DOE Joint Genome Institute"/>
            <person name="Copeland A."/>
            <person name="Lucas S."/>
            <person name="Lapidus A."/>
            <person name="Barry K."/>
            <person name="Glavina del Rio T."/>
            <person name="Dalin E."/>
            <person name="Tice H."/>
            <person name="Pitluck S."/>
            <person name="Meincke L."/>
            <person name="Brettin T."/>
            <person name="Bruce D."/>
            <person name="Detter J.C."/>
            <person name="Han C."/>
            <person name="Kuske C.R."/>
            <person name="Schmutz J."/>
            <person name="Larimer F."/>
            <person name="Land M."/>
            <person name="Hauser L."/>
            <person name="Kyrpides N."/>
            <person name="Mikhailova N."/>
            <person name="Noll K."/>
            <person name="Richardson P."/>
        </authorList>
    </citation>
    <scope>NUCLEOTIDE SEQUENCE [LARGE SCALE GENOMIC DNA]</scope>
    <source>
        <strain>DSM 10674 / SJ95</strain>
    </source>
</reference>